<reference key="1">
    <citation type="journal article" date="2003" name="Genome Res.">
        <title>Genome sequence of an M3 strain of Streptococcus pyogenes reveals a large-scale genomic rearrangement in invasive strains and new insights into phage evolution.</title>
        <authorList>
            <person name="Nakagawa I."/>
            <person name="Kurokawa K."/>
            <person name="Yamashita A."/>
            <person name="Nakata M."/>
            <person name="Tomiyasu Y."/>
            <person name="Okahashi N."/>
            <person name="Kawabata S."/>
            <person name="Yamazaki K."/>
            <person name="Shiba T."/>
            <person name="Yasunaga T."/>
            <person name="Hayashi H."/>
            <person name="Hattori M."/>
            <person name="Hamada S."/>
        </authorList>
    </citation>
    <scope>NUCLEOTIDE SEQUENCE [LARGE SCALE GENOMIC DNA]</scope>
    <source>
        <strain>SSI-1</strain>
    </source>
</reference>
<organism>
    <name type="scientific">Streptococcus pyogenes serotype M3 (strain SSI-1)</name>
    <dbReference type="NCBI Taxonomy" id="193567"/>
    <lineage>
        <taxon>Bacteria</taxon>
        <taxon>Bacillati</taxon>
        <taxon>Bacillota</taxon>
        <taxon>Bacilli</taxon>
        <taxon>Lactobacillales</taxon>
        <taxon>Streptococcaceae</taxon>
        <taxon>Streptococcus</taxon>
    </lineage>
</organism>
<dbReference type="EC" id="2.1.1.228"/>
<dbReference type="EMBL" id="BA000034">
    <property type="protein sequence ID" value="BAC64375.1"/>
    <property type="molecule type" value="Genomic_DNA"/>
</dbReference>
<dbReference type="RefSeq" id="WP_002985053.1">
    <property type="nucleotide sequence ID" value="NC_004606.1"/>
</dbReference>
<dbReference type="SMR" id="P0DG21"/>
<dbReference type="GeneID" id="69901041"/>
<dbReference type="KEGG" id="sps:SPs1280"/>
<dbReference type="HOGENOM" id="CLU_047363_0_1_9"/>
<dbReference type="GO" id="GO:0005829">
    <property type="term" value="C:cytosol"/>
    <property type="evidence" value="ECO:0007669"/>
    <property type="project" value="TreeGrafter"/>
</dbReference>
<dbReference type="GO" id="GO:0052906">
    <property type="term" value="F:tRNA (guanine(37)-N1)-methyltransferase activity"/>
    <property type="evidence" value="ECO:0007669"/>
    <property type="project" value="UniProtKB-UniRule"/>
</dbReference>
<dbReference type="GO" id="GO:0002939">
    <property type="term" value="P:tRNA N1-guanine methylation"/>
    <property type="evidence" value="ECO:0007669"/>
    <property type="project" value="TreeGrafter"/>
</dbReference>
<dbReference type="CDD" id="cd18080">
    <property type="entry name" value="TrmD-like"/>
    <property type="match status" value="1"/>
</dbReference>
<dbReference type="FunFam" id="1.10.1270.20:FF:000001">
    <property type="entry name" value="tRNA (guanine-N(1)-)-methyltransferase"/>
    <property type="match status" value="1"/>
</dbReference>
<dbReference type="FunFam" id="3.40.1280.10:FF:000001">
    <property type="entry name" value="tRNA (guanine-N(1)-)-methyltransferase"/>
    <property type="match status" value="1"/>
</dbReference>
<dbReference type="Gene3D" id="3.40.1280.10">
    <property type="match status" value="1"/>
</dbReference>
<dbReference type="Gene3D" id="1.10.1270.20">
    <property type="entry name" value="tRNA(m1g37)methyltransferase, domain 2"/>
    <property type="match status" value="1"/>
</dbReference>
<dbReference type="HAMAP" id="MF_00605">
    <property type="entry name" value="TrmD"/>
    <property type="match status" value="1"/>
</dbReference>
<dbReference type="InterPro" id="IPR029028">
    <property type="entry name" value="Alpha/beta_knot_MTases"/>
</dbReference>
<dbReference type="InterPro" id="IPR023148">
    <property type="entry name" value="tRNA_m1G_MeTrfase_C_sf"/>
</dbReference>
<dbReference type="InterPro" id="IPR002649">
    <property type="entry name" value="tRNA_m1G_MeTrfase_TrmD"/>
</dbReference>
<dbReference type="InterPro" id="IPR029026">
    <property type="entry name" value="tRNA_m1G_MTases_N"/>
</dbReference>
<dbReference type="InterPro" id="IPR016009">
    <property type="entry name" value="tRNA_MeTrfase_TRMD/TRM10"/>
</dbReference>
<dbReference type="NCBIfam" id="NF000648">
    <property type="entry name" value="PRK00026.1"/>
    <property type="match status" value="1"/>
</dbReference>
<dbReference type="NCBIfam" id="TIGR00088">
    <property type="entry name" value="trmD"/>
    <property type="match status" value="1"/>
</dbReference>
<dbReference type="PANTHER" id="PTHR46417">
    <property type="entry name" value="TRNA (GUANINE-N(1)-)-METHYLTRANSFERASE"/>
    <property type="match status" value="1"/>
</dbReference>
<dbReference type="PANTHER" id="PTHR46417:SF1">
    <property type="entry name" value="TRNA (GUANINE-N(1)-)-METHYLTRANSFERASE"/>
    <property type="match status" value="1"/>
</dbReference>
<dbReference type="Pfam" id="PF01746">
    <property type="entry name" value="tRNA_m1G_MT"/>
    <property type="match status" value="1"/>
</dbReference>
<dbReference type="PIRSF" id="PIRSF000386">
    <property type="entry name" value="tRNA_mtase"/>
    <property type="match status" value="1"/>
</dbReference>
<dbReference type="SUPFAM" id="SSF75217">
    <property type="entry name" value="alpha/beta knot"/>
    <property type="match status" value="1"/>
</dbReference>
<name>TRMD_STRPQ</name>
<sequence>MKIDILTLFPEMFAPLEHSIVGKAKEKGLLDIHYHNFRDYAEKARHVDDEPYGGGQGMLLRAQPIFDTIEQIEAKKPRIILLDPAGKPFTQAYAEELALEEELIFICGHYEGYDERIKTLVTDEISLGDFVLTGGELAAMTMVDATVRLIPQVLGKESSHQDDSFSSGLLEYPQYTRPYDYRGMTVPDVLMSGHHERIRLWRLEESLRKTYLRRPDLLERYDFSEEERKLLDKIKEALGQGED</sequence>
<comment type="function">
    <text evidence="1">Specifically methylates guanosine-37 in various tRNAs.</text>
</comment>
<comment type="catalytic activity">
    <reaction>
        <text>guanosine(37) in tRNA + S-adenosyl-L-methionine = N(1)-methylguanosine(37) in tRNA + S-adenosyl-L-homocysteine + H(+)</text>
        <dbReference type="Rhea" id="RHEA:36899"/>
        <dbReference type="Rhea" id="RHEA-COMP:10145"/>
        <dbReference type="Rhea" id="RHEA-COMP:10147"/>
        <dbReference type="ChEBI" id="CHEBI:15378"/>
        <dbReference type="ChEBI" id="CHEBI:57856"/>
        <dbReference type="ChEBI" id="CHEBI:59789"/>
        <dbReference type="ChEBI" id="CHEBI:73542"/>
        <dbReference type="ChEBI" id="CHEBI:74269"/>
        <dbReference type="EC" id="2.1.1.228"/>
    </reaction>
</comment>
<comment type="subunit">
    <text evidence="1">Homodimer.</text>
</comment>
<comment type="subcellular location">
    <subcellularLocation>
        <location evidence="2">Cytoplasm</location>
    </subcellularLocation>
</comment>
<comment type="similarity">
    <text evidence="2">Belongs to the RNA methyltransferase TrmD family.</text>
</comment>
<protein>
    <recommendedName>
        <fullName>tRNA (guanine-N(1)-)-methyltransferase</fullName>
        <ecNumber>2.1.1.228</ecNumber>
    </recommendedName>
    <alternativeName>
        <fullName>M1G-methyltransferase</fullName>
    </alternativeName>
    <alternativeName>
        <fullName>tRNA [GM37] methyltransferase</fullName>
    </alternativeName>
</protein>
<evidence type="ECO:0000250" key="1"/>
<evidence type="ECO:0000305" key="2"/>
<accession>P0DG21</accession>
<accession>Q8K7X3</accession>
<feature type="chain" id="PRO_0000411600" description="tRNA (guanine-N(1)-)-methyltransferase">
    <location>
        <begin position="1"/>
        <end position="243"/>
    </location>
</feature>
<feature type="binding site" evidence="1">
    <location>
        <position position="108"/>
    </location>
    <ligand>
        <name>S-adenosyl-L-methionine</name>
        <dbReference type="ChEBI" id="CHEBI:59789"/>
    </ligand>
</feature>
<feature type="binding site" evidence="1">
    <location>
        <begin position="127"/>
        <end position="132"/>
    </location>
    <ligand>
        <name>S-adenosyl-L-methionine</name>
        <dbReference type="ChEBI" id="CHEBI:59789"/>
    </ligand>
</feature>
<keyword id="KW-0963">Cytoplasm</keyword>
<keyword id="KW-0489">Methyltransferase</keyword>
<keyword id="KW-0949">S-adenosyl-L-methionine</keyword>
<keyword id="KW-0808">Transferase</keyword>
<keyword id="KW-0819">tRNA processing</keyword>
<gene>
    <name type="primary">trmD</name>
    <name type="ordered locus">SPs1280</name>
</gene>
<proteinExistence type="inferred from homology"/>